<feature type="chain" id="PRO_0000207565" description="UPF0149 protein PP_5201">
    <location>
        <begin position="1"/>
        <end position="184"/>
    </location>
</feature>
<keyword id="KW-1185">Reference proteome</keyword>
<reference key="1">
    <citation type="journal article" date="2002" name="Environ. Microbiol.">
        <title>Complete genome sequence and comparative analysis of the metabolically versatile Pseudomonas putida KT2440.</title>
        <authorList>
            <person name="Nelson K.E."/>
            <person name="Weinel C."/>
            <person name="Paulsen I.T."/>
            <person name="Dodson R.J."/>
            <person name="Hilbert H."/>
            <person name="Martins dos Santos V.A.P."/>
            <person name="Fouts D.E."/>
            <person name="Gill S.R."/>
            <person name="Pop M."/>
            <person name="Holmes M."/>
            <person name="Brinkac L.M."/>
            <person name="Beanan M.J."/>
            <person name="DeBoy R.T."/>
            <person name="Daugherty S.C."/>
            <person name="Kolonay J.F."/>
            <person name="Madupu R."/>
            <person name="Nelson W.C."/>
            <person name="White O."/>
            <person name="Peterson J.D."/>
            <person name="Khouri H.M."/>
            <person name="Hance I."/>
            <person name="Chris Lee P."/>
            <person name="Holtzapple E.K."/>
            <person name="Scanlan D."/>
            <person name="Tran K."/>
            <person name="Moazzez A."/>
            <person name="Utterback T.R."/>
            <person name="Rizzo M."/>
            <person name="Lee K."/>
            <person name="Kosack D."/>
            <person name="Moestl D."/>
            <person name="Wedler H."/>
            <person name="Lauber J."/>
            <person name="Stjepandic D."/>
            <person name="Hoheisel J."/>
            <person name="Straetz M."/>
            <person name="Heim S."/>
            <person name="Kiewitz C."/>
            <person name="Eisen J.A."/>
            <person name="Timmis K.N."/>
            <person name="Duesterhoeft A."/>
            <person name="Tuemmler B."/>
            <person name="Fraser C.M."/>
        </authorList>
    </citation>
    <scope>NUCLEOTIDE SEQUENCE [LARGE SCALE GENOMIC DNA]</scope>
    <source>
        <strain>ATCC 47054 / DSM 6125 / CFBP 8728 / NCIMB 11950 / KT2440</strain>
    </source>
</reference>
<sequence>MPNTQSPYNAFAMLLSSNGHPVTPAELHGLLIGRSCAGAGFDADAWLADAAQLLEIEPGDSVRNALVGLQEMVKGELTSDDMAIVLLLPTDDAALSDRATALGQWCQGFVTGFGLNAGGKDLSDEAKEVLQDLVAISQVQEALEESEDGESDYMEVMEYLRVAPLLLFSELAKPAAPAPKPSLH</sequence>
<gene>
    <name type="ordered locus">PP_5201</name>
</gene>
<proteinExistence type="inferred from homology"/>
<comment type="similarity">
    <text evidence="1">Belongs to the UPF0149 family.</text>
</comment>
<dbReference type="EMBL" id="AE015451">
    <property type="protein sequence ID" value="AAN70766.1"/>
    <property type="molecule type" value="Genomic_DNA"/>
</dbReference>
<dbReference type="RefSeq" id="NP_747302.1">
    <property type="nucleotide sequence ID" value="NC_002947.4"/>
</dbReference>
<dbReference type="RefSeq" id="WP_010955725.1">
    <property type="nucleotide sequence ID" value="NZ_CP169744.1"/>
</dbReference>
<dbReference type="SMR" id="Q88CI0"/>
<dbReference type="STRING" id="160488.PP_5201"/>
<dbReference type="PaxDb" id="160488-PP_5201"/>
<dbReference type="KEGG" id="ppu:PP_5201"/>
<dbReference type="PATRIC" id="fig|160488.4.peg.5549"/>
<dbReference type="eggNOG" id="COG3079">
    <property type="taxonomic scope" value="Bacteria"/>
</dbReference>
<dbReference type="HOGENOM" id="CLU_085336_0_1_6"/>
<dbReference type="OrthoDB" id="9783391at2"/>
<dbReference type="PhylomeDB" id="Q88CI0"/>
<dbReference type="BioCyc" id="PPUT160488:G1G01-5547-MONOMER"/>
<dbReference type="Proteomes" id="UP000000556">
    <property type="component" value="Chromosome"/>
</dbReference>
<dbReference type="GO" id="GO:0005829">
    <property type="term" value="C:cytosol"/>
    <property type="evidence" value="ECO:0007669"/>
    <property type="project" value="TreeGrafter"/>
</dbReference>
<dbReference type="Gene3D" id="1.20.120.740">
    <property type="entry name" value="YgfB uncharacterised protein family UPF0149, PF03695"/>
    <property type="match status" value="1"/>
</dbReference>
<dbReference type="HAMAP" id="MF_00346">
    <property type="entry name" value="UPF0149"/>
    <property type="match status" value="1"/>
</dbReference>
<dbReference type="InterPro" id="IPR011978">
    <property type="entry name" value="YgfB-like"/>
</dbReference>
<dbReference type="InterPro" id="IPR036255">
    <property type="entry name" value="YgfB-like_sf"/>
</dbReference>
<dbReference type="NCBIfam" id="NF002562">
    <property type="entry name" value="PRK02166.1"/>
    <property type="match status" value="1"/>
</dbReference>
<dbReference type="PANTHER" id="PTHR37528">
    <property type="entry name" value="UPF0149 PROTEIN YGFB"/>
    <property type="match status" value="1"/>
</dbReference>
<dbReference type="PANTHER" id="PTHR37528:SF1">
    <property type="entry name" value="UPF0149 PROTEIN YGFB"/>
    <property type="match status" value="1"/>
</dbReference>
<dbReference type="Pfam" id="PF03695">
    <property type="entry name" value="UPF0149"/>
    <property type="match status" value="1"/>
</dbReference>
<dbReference type="SUPFAM" id="SSF101327">
    <property type="entry name" value="YgfB-like"/>
    <property type="match status" value="1"/>
</dbReference>
<protein>
    <recommendedName>
        <fullName evidence="1">UPF0149 protein PP_5201</fullName>
    </recommendedName>
</protein>
<organism>
    <name type="scientific">Pseudomonas putida (strain ATCC 47054 / DSM 6125 / CFBP 8728 / NCIMB 11950 / KT2440)</name>
    <dbReference type="NCBI Taxonomy" id="160488"/>
    <lineage>
        <taxon>Bacteria</taxon>
        <taxon>Pseudomonadati</taxon>
        <taxon>Pseudomonadota</taxon>
        <taxon>Gammaproteobacteria</taxon>
        <taxon>Pseudomonadales</taxon>
        <taxon>Pseudomonadaceae</taxon>
        <taxon>Pseudomonas</taxon>
    </lineage>
</organism>
<evidence type="ECO:0000255" key="1">
    <source>
        <dbReference type="HAMAP-Rule" id="MF_00346"/>
    </source>
</evidence>
<name>Y5201_PSEPK</name>
<accession>Q88CI0</accession>